<comment type="subcellular location">
    <subcellularLocation>
        <location evidence="3">Cell membrane</location>
        <topology evidence="3">Single-pass membrane protein</topology>
    </subcellularLocation>
</comment>
<comment type="similarity">
    <text evidence="3">Belongs to the TrbI/VirB10 family.</text>
</comment>
<keyword id="KW-1003">Cell membrane</keyword>
<keyword id="KW-0472">Membrane</keyword>
<keyword id="KW-0812">Transmembrane</keyword>
<keyword id="KW-1133">Transmembrane helix</keyword>
<keyword id="KW-0843">Virulence</keyword>
<dbReference type="EMBL" id="DQ861303">
    <property type="protein sequence ID" value="ABI23036.1"/>
    <property type="molecule type" value="Genomic_DNA"/>
</dbReference>
<dbReference type="EMBL" id="CP000709">
    <property type="protein sequence ID" value="ABQ61987.1"/>
    <property type="molecule type" value="Genomic_DNA"/>
</dbReference>
<dbReference type="RefSeq" id="WP_006014994.1">
    <property type="nucleotide sequence ID" value="NC_009504.1"/>
</dbReference>
<dbReference type="SMR" id="Q0GK35"/>
<dbReference type="GeneID" id="45125479"/>
<dbReference type="KEGG" id="bov:BOV_A0055"/>
<dbReference type="HOGENOM" id="CLU_041899_2_1_5"/>
<dbReference type="PhylomeDB" id="Q0GK35"/>
<dbReference type="Proteomes" id="UP000006383">
    <property type="component" value="Chromosome II"/>
</dbReference>
<dbReference type="GO" id="GO:0005886">
    <property type="term" value="C:plasma membrane"/>
    <property type="evidence" value="ECO:0007669"/>
    <property type="project" value="UniProtKB-SubCell"/>
</dbReference>
<dbReference type="CDD" id="cd16429">
    <property type="entry name" value="VirB10"/>
    <property type="match status" value="1"/>
</dbReference>
<dbReference type="Gene3D" id="2.40.128.260">
    <property type="entry name" value="Type IV secretion system, VirB10/TraB/TrbI"/>
    <property type="match status" value="2"/>
</dbReference>
<dbReference type="InterPro" id="IPR047695">
    <property type="entry name" value="T4SS_VirB10/PtlG"/>
</dbReference>
<dbReference type="InterPro" id="IPR005498">
    <property type="entry name" value="T4SS_VirB10/TraB/TrbI"/>
</dbReference>
<dbReference type="InterPro" id="IPR042217">
    <property type="entry name" value="T4SS_VirB10/TrbI"/>
</dbReference>
<dbReference type="NCBIfam" id="NF038091">
    <property type="entry name" value="T4SS_VirB10"/>
    <property type="match status" value="1"/>
</dbReference>
<dbReference type="Pfam" id="PF03743">
    <property type="entry name" value="TrbI"/>
    <property type="match status" value="1"/>
</dbReference>
<sequence>MTQENIPVQPGTLDGERGLPTVNENGSGRTRKVLLFLFVVGFIVVLLLLLVFHMRGNAENNHHSDKTMVQTSTVPMRTFKLPPPPPPAPPEPPAPPPAPAMPIAEPAAAALSLPPLPDDTPAKDDVLDKSASALMVVTKSSGDTNAQTTNARIQALLDSQKNTKQDAGSLGTLLHGTQTDARMASLLRNRDFLLAKGSIINCALQTRLDSTVPGMAACVVTRNMYSDNGKVLLIERGSTISGEYDANVKQGMARIYVLWTRVKTPNGVVIDLDSPGADPLGGAGLPGYIDSHFWKRFGGALMLSTIETFGRYATQKVGGGGSNQINLNTGGGESTSNLASTALKDTINIPPTLYKNQGEEIGIYIARDLDFSSVYDVKPK</sequence>
<reference key="1">
    <citation type="submission" date="2006-07" db="EMBL/GenBank/DDBJ databases">
        <title>virB10 gene of Brucella ovis 63/290.</title>
        <authorList>
            <person name="Wang Y."/>
            <person name="Chen C."/>
            <person name="Liu J."/>
        </authorList>
    </citation>
    <scope>NUCLEOTIDE SEQUENCE [GENOMIC DNA]</scope>
</reference>
<reference key="2">
    <citation type="journal article" date="2009" name="PLoS ONE">
        <title>Genome degradation in Brucella ovis corresponds with narrowing of its host range and tissue tropism.</title>
        <authorList>
            <person name="Tsolis R.M."/>
            <person name="Seshadri R."/>
            <person name="Santos R.L."/>
            <person name="Sangari F.J."/>
            <person name="Lobo J.M."/>
            <person name="de Jong M.F."/>
            <person name="Ren Q."/>
            <person name="Myers G."/>
            <person name="Brinkac L.M."/>
            <person name="Nelson W.C."/>
            <person name="Deboy R.T."/>
            <person name="Angiuoli S."/>
            <person name="Khouri H."/>
            <person name="Dimitrov G."/>
            <person name="Robinson J.R."/>
            <person name="Mulligan S."/>
            <person name="Walker R.L."/>
            <person name="Elzer P.E."/>
            <person name="Hassan K.A."/>
            <person name="Paulsen I.T."/>
        </authorList>
    </citation>
    <scope>NUCLEOTIDE SEQUENCE [LARGE SCALE GENOMIC DNA]</scope>
    <source>
        <strain>ATCC 25840 / 63/290 / NCTC 10512</strain>
    </source>
</reference>
<organism>
    <name type="scientific">Brucella ovis (strain ATCC 25840 / 63/290 / NCTC 10512)</name>
    <dbReference type="NCBI Taxonomy" id="444178"/>
    <lineage>
        <taxon>Bacteria</taxon>
        <taxon>Pseudomonadati</taxon>
        <taxon>Pseudomonadota</taxon>
        <taxon>Alphaproteobacteria</taxon>
        <taxon>Hyphomicrobiales</taxon>
        <taxon>Brucellaceae</taxon>
        <taxon>Brucella/Ochrobactrum group</taxon>
        <taxon>Brucella</taxon>
    </lineage>
</organism>
<proteinExistence type="inferred from homology"/>
<accession>Q0GK35</accession>
<accession>A5VTI1</accession>
<feature type="chain" id="PRO_0000291387" description="Type IV secretion system protein virB10">
    <location>
        <begin position="1"/>
        <end position="380"/>
    </location>
</feature>
<feature type="transmembrane region" description="Helical" evidence="1">
    <location>
        <begin position="33"/>
        <end position="53"/>
    </location>
</feature>
<feature type="region of interest" description="Disordered" evidence="2">
    <location>
        <begin position="1"/>
        <end position="26"/>
    </location>
</feature>
<feature type="region of interest" description="Disordered" evidence="2">
    <location>
        <begin position="78"/>
        <end position="102"/>
    </location>
</feature>
<feature type="compositionally biased region" description="Pro residues" evidence="2">
    <location>
        <begin position="81"/>
        <end position="100"/>
    </location>
</feature>
<feature type="sequence conflict" description="In Ref. 1; ABI23036." evidence="3" ref="1">
    <original>T</original>
    <variation>TAGDTVVQT</variation>
    <location>
        <position position="148"/>
    </location>
</feature>
<feature type="sequence conflict" description="In Ref. 1; ABI23036." evidence="3" ref="1">
    <original>F</original>
    <variation>L</variation>
    <location>
        <position position="309"/>
    </location>
</feature>
<feature type="sequence conflict" description="In Ref. 1; ABI23036." evidence="3" ref="1">
    <original>K</original>
    <variation>Q</variation>
    <location>
        <position position="378"/>
    </location>
</feature>
<gene>
    <name type="primary">virB10</name>
    <name type="ordered locus">BOV_A0055</name>
</gene>
<evidence type="ECO:0000255" key="1"/>
<evidence type="ECO:0000256" key="2">
    <source>
        <dbReference type="SAM" id="MobiDB-lite"/>
    </source>
</evidence>
<evidence type="ECO:0000305" key="3"/>
<name>VIRBA_BRUO2</name>
<protein>
    <recommendedName>
        <fullName>Type IV secretion system protein virB10</fullName>
    </recommendedName>
</protein>